<evidence type="ECO:0000255" key="1">
    <source>
        <dbReference type="PROSITE-ProRule" id="PRU00080"/>
    </source>
</evidence>
<gene>
    <name type="ordered locus">At4g23960</name>
    <name type="ORF">T32A16.130</name>
</gene>
<keyword id="KW-1185">Reference proteome</keyword>
<name>FB335_ARATH</name>
<sequence length="122" mass="14067">MIEQLFPEVTCYALRYLDYSSLCQLSMTSSSMRKTANDDVLWRALYFQEFTEETNGGTPVNGWKAFFAVTKQVMTVNDKFFSILDSRSLPRMTSLWLNSDYVKCFNGSGELFTGYLLTYPLL</sequence>
<feature type="chain" id="PRO_0000396050" description="Probable F-box protein At4g23960">
    <location>
        <begin position="1"/>
        <end position="122"/>
    </location>
</feature>
<feature type="domain" description="F-box" evidence="1">
    <location>
        <begin position="1"/>
        <end position="45"/>
    </location>
</feature>
<reference key="1">
    <citation type="journal article" date="1999" name="Nature">
        <title>Sequence and analysis of chromosome 4 of the plant Arabidopsis thaliana.</title>
        <authorList>
            <person name="Mayer K.F.X."/>
            <person name="Schueller C."/>
            <person name="Wambutt R."/>
            <person name="Murphy G."/>
            <person name="Volckaert G."/>
            <person name="Pohl T."/>
            <person name="Duesterhoeft A."/>
            <person name="Stiekema W."/>
            <person name="Entian K.-D."/>
            <person name="Terryn N."/>
            <person name="Harris B."/>
            <person name="Ansorge W."/>
            <person name="Brandt P."/>
            <person name="Grivell L.A."/>
            <person name="Rieger M."/>
            <person name="Weichselgartner M."/>
            <person name="de Simone V."/>
            <person name="Obermaier B."/>
            <person name="Mache R."/>
            <person name="Mueller M."/>
            <person name="Kreis M."/>
            <person name="Delseny M."/>
            <person name="Puigdomenech P."/>
            <person name="Watson M."/>
            <person name="Schmidtheini T."/>
            <person name="Reichert B."/>
            <person name="Portetelle D."/>
            <person name="Perez-Alonso M."/>
            <person name="Boutry M."/>
            <person name="Bancroft I."/>
            <person name="Vos P."/>
            <person name="Hoheisel J."/>
            <person name="Zimmermann W."/>
            <person name="Wedler H."/>
            <person name="Ridley P."/>
            <person name="Langham S.-A."/>
            <person name="McCullagh B."/>
            <person name="Bilham L."/>
            <person name="Robben J."/>
            <person name="van der Schueren J."/>
            <person name="Grymonprez B."/>
            <person name="Chuang Y.-J."/>
            <person name="Vandenbussche F."/>
            <person name="Braeken M."/>
            <person name="Weltjens I."/>
            <person name="Voet M."/>
            <person name="Bastiaens I."/>
            <person name="Aert R."/>
            <person name="Defoor E."/>
            <person name="Weitzenegger T."/>
            <person name="Bothe G."/>
            <person name="Ramsperger U."/>
            <person name="Hilbert H."/>
            <person name="Braun M."/>
            <person name="Holzer E."/>
            <person name="Brandt A."/>
            <person name="Peters S."/>
            <person name="van Staveren M."/>
            <person name="Dirkse W."/>
            <person name="Mooijman P."/>
            <person name="Klein Lankhorst R."/>
            <person name="Rose M."/>
            <person name="Hauf J."/>
            <person name="Koetter P."/>
            <person name="Berneiser S."/>
            <person name="Hempel S."/>
            <person name="Feldpausch M."/>
            <person name="Lamberth S."/>
            <person name="Van den Daele H."/>
            <person name="De Keyser A."/>
            <person name="Buysshaert C."/>
            <person name="Gielen J."/>
            <person name="Villarroel R."/>
            <person name="De Clercq R."/>
            <person name="van Montagu M."/>
            <person name="Rogers J."/>
            <person name="Cronin A."/>
            <person name="Quail M.A."/>
            <person name="Bray-Allen S."/>
            <person name="Clark L."/>
            <person name="Doggett J."/>
            <person name="Hall S."/>
            <person name="Kay M."/>
            <person name="Lennard N."/>
            <person name="McLay K."/>
            <person name="Mayes R."/>
            <person name="Pettett A."/>
            <person name="Rajandream M.A."/>
            <person name="Lyne M."/>
            <person name="Benes V."/>
            <person name="Rechmann S."/>
            <person name="Borkova D."/>
            <person name="Bloecker H."/>
            <person name="Scharfe M."/>
            <person name="Grimm M."/>
            <person name="Loehnert T.-H."/>
            <person name="Dose S."/>
            <person name="de Haan M."/>
            <person name="Maarse A.C."/>
            <person name="Schaefer M."/>
            <person name="Mueller-Auer S."/>
            <person name="Gabel C."/>
            <person name="Fuchs M."/>
            <person name="Fartmann B."/>
            <person name="Granderath K."/>
            <person name="Dauner D."/>
            <person name="Herzl A."/>
            <person name="Neumann S."/>
            <person name="Argiriou A."/>
            <person name="Vitale D."/>
            <person name="Liguori R."/>
            <person name="Piravandi E."/>
            <person name="Massenet O."/>
            <person name="Quigley F."/>
            <person name="Clabauld G."/>
            <person name="Muendlein A."/>
            <person name="Felber R."/>
            <person name="Schnabl S."/>
            <person name="Hiller R."/>
            <person name="Schmidt W."/>
            <person name="Lecharny A."/>
            <person name="Aubourg S."/>
            <person name="Chefdor F."/>
            <person name="Cooke R."/>
            <person name="Berger C."/>
            <person name="Monfort A."/>
            <person name="Casacuberta E."/>
            <person name="Gibbons T."/>
            <person name="Weber N."/>
            <person name="Vandenbol M."/>
            <person name="Bargues M."/>
            <person name="Terol J."/>
            <person name="Torres A."/>
            <person name="Perez-Perez A."/>
            <person name="Purnelle B."/>
            <person name="Bent E."/>
            <person name="Johnson S."/>
            <person name="Tacon D."/>
            <person name="Jesse T."/>
            <person name="Heijnen L."/>
            <person name="Schwarz S."/>
            <person name="Scholler P."/>
            <person name="Heber S."/>
            <person name="Francs P."/>
            <person name="Bielke C."/>
            <person name="Frishman D."/>
            <person name="Haase D."/>
            <person name="Lemcke K."/>
            <person name="Mewes H.-W."/>
            <person name="Stocker S."/>
            <person name="Zaccaria P."/>
            <person name="Bevan M."/>
            <person name="Wilson R.K."/>
            <person name="de la Bastide M."/>
            <person name="Habermann K."/>
            <person name="Parnell L."/>
            <person name="Dedhia N."/>
            <person name="Gnoj L."/>
            <person name="Schutz K."/>
            <person name="Huang E."/>
            <person name="Spiegel L."/>
            <person name="Sekhon M."/>
            <person name="Murray J."/>
            <person name="Sheet P."/>
            <person name="Cordes M."/>
            <person name="Abu-Threideh J."/>
            <person name="Stoneking T."/>
            <person name="Kalicki J."/>
            <person name="Graves T."/>
            <person name="Harmon G."/>
            <person name="Edwards J."/>
            <person name="Latreille P."/>
            <person name="Courtney L."/>
            <person name="Cloud J."/>
            <person name="Abbott A."/>
            <person name="Scott K."/>
            <person name="Johnson D."/>
            <person name="Minx P."/>
            <person name="Bentley D."/>
            <person name="Fulton B."/>
            <person name="Miller N."/>
            <person name="Greco T."/>
            <person name="Kemp K."/>
            <person name="Kramer J."/>
            <person name="Fulton L."/>
            <person name="Mardis E."/>
            <person name="Dante M."/>
            <person name="Pepin K."/>
            <person name="Hillier L.W."/>
            <person name="Nelson J."/>
            <person name="Spieth J."/>
            <person name="Ryan E."/>
            <person name="Andrews S."/>
            <person name="Geisel C."/>
            <person name="Layman D."/>
            <person name="Du H."/>
            <person name="Ali J."/>
            <person name="Berghoff A."/>
            <person name="Jones K."/>
            <person name="Drone K."/>
            <person name="Cotton M."/>
            <person name="Joshu C."/>
            <person name="Antonoiu B."/>
            <person name="Zidanic M."/>
            <person name="Strong C."/>
            <person name="Sun H."/>
            <person name="Lamar B."/>
            <person name="Yordan C."/>
            <person name="Ma P."/>
            <person name="Zhong J."/>
            <person name="Preston R."/>
            <person name="Vil D."/>
            <person name="Shekher M."/>
            <person name="Matero A."/>
            <person name="Shah R."/>
            <person name="Swaby I.K."/>
            <person name="O'Shaughnessy A."/>
            <person name="Rodriguez M."/>
            <person name="Hoffman J."/>
            <person name="Till S."/>
            <person name="Granat S."/>
            <person name="Shohdy N."/>
            <person name="Hasegawa A."/>
            <person name="Hameed A."/>
            <person name="Lodhi M."/>
            <person name="Johnson A."/>
            <person name="Chen E."/>
            <person name="Marra M.A."/>
            <person name="Martienssen R."/>
            <person name="McCombie W.R."/>
        </authorList>
    </citation>
    <scope>NUCLEOTIDE SEQUENCE [LARGE SCALE GENOMIC DNA]</scope>
    <source>
        <strain>cv. Columbia</strain>
    </source>
</reference>
<reference key="2">
    <citation type="journal article" date="2017" name="Plant J.">
        <title>Araport11: a complete reannotation of the Arabidopsis thaliana reference genome.</title>
        <authorList>
            <person name="Cheng C.Y."/>
            <person name="Krishnakumar V."/>
            <person name="Chan A.P."/>
            <person name="Thibaud-Nissen F."/>
            <person name="Schobel S."/>
            <person name="Town C.D."/>
        </authorList>
    </citation>
    <scope>GENOME REANNOTATION</scope>
    <source>
        <strain>cv. Columbia</strain>
    </source>
</reference>
<organism>
    <name type="scientific">Arabidopsis thaliana</name>
    <name type="common">Mouse-ear cress</name>
    <dbReference type="NCBI Taxonomy" id="3702"/>
    <lineage>
        <taxon>Eukaryota</taxon>
        <taxon>Viridiplantae</taxon>
        <taxon>Streptophyta</taxon>
        <taxon>Embryophyta</taxon>
        <taxon>Tracheophyta</taxon>
        <taxon>Spermatophyta</taxon>
        <taxon>Magnoliopsida</taxon>
        <taxon>eudicotyledons</taxon>
        <taxon>Gunneridae</taxon>
        <taxon>Pentapetalae</taxon>
        <taxon>rosids</taxon>
        <taxon>malvids</taxon>
        <taxon>Brassicales</taxon>
        <taxon>Brassicaceae</taxon>
        <taxon>Camelineae</taxon>
        <taxon>Arabidopsis</taxon>
    </lineage>
</organism>
<dbReference type="EMBL" id="AL078468">
    <property type="protein sequence ID" value="CAB43896.1"/>
    <property type="molecule type" value="Genomic_DNA"/>
</dbReference>
<dbReference type="EMBL" id="AL161560">
    <property type="protein sequence ID" value="CAB81314.1"/>
    <property type="molecule type" value="Genomic_DNA"/>
</dbReference>
<dbReference type="EMBL" id="CP002687">
    <property type="protein sequence ID" value="AEE84833.1"/>
    <property type="molecule type" value="Genomic_DNA"/>
</dbReference>
<dbReference type="PIR" id="T08915">
    <property type="entry name" value="T08915"/>
</dbReference>
<dbReference type="RefSeq" id="NP_194127.1">
    <property type="nucleotide sequence ID" value="NM_118528.1"/>
</dbReference>
<dbReference type="SMR" id="Q9T0B0"/>
<dbReference type="STRING" id="3702.Q9T0B0"/>
<dbReference type="PaxDb" id="3702-AT4G23960.1"/>
<dbReference type="EnsemblPlants" id="AT4G23960.1">
    <property type="protein sequence ID" value="AT4G23960.1"/>
    <property type="gene ID" value="AT4G23960"/>
</dbReference>
<dbReference type="GeneID" id="828496"/>
<dbReference type="Gramene" id="AT4G23960.1">
    <property type="protein sequence ID" value="AT4G23960.1"/>
    <property type="gene ID" value="AT4G23960"/>
</dbReference>
<dbReference type="KEGG" id="ath:AT4G23960"/>
<dbReference type="Araport" id="AT4G23960"/>
<dbReference type="TAIR" id="AT4G23960"/>
<dbReference type="eggNOG" id="ENOG502QT1W">
    <property type="taxonomic scope" value="Eukaryota"/>
</dbReference>
<dbReference type="HOGENOM" id="CLU_2029892_0_0_1"/>
<dbReference type="InParanoid" id="Q9T0B0"/>
<dbReference type="PhylomeDB" id="Q9T0B0"/>
<dbReference type="PRO" id="PR:Q9T0B0"/>
<dbReference type="Proteomes" id="UP000006548">
    <property type="component" value="Chromosome 4"/>
</dbReference>
<dbReference type="ExpressionAtlas" id="Q9T0B0">
    <property type="expression patterns" value="baseline and differential"/>
</dbReference>
<dbReference type="Gene3D" id="1.20.1280.50">
    <property type="match status" value="1"/>
</dbReference>
<dbReference type="Gene3D" id="3.10.450.50">
    <property type="match status" value="1"/>
</dbReference>
<dbReference type="InterPro" id="IPR036047">
    <property type="entry name" value="F-box-like_dom_sf"/>
</dbReference>
<dbReference type="InterPro" id="IPR001810">
    <property type="entry name" value="F-box_dom"/>
</dbReference>
<dbReference type="InterPro" id="IPR044260">
    <property type="entry name" value="SKIP8-like"/>
</dbReference>
<dbReference type="PANTHER" id="PTHR47124">
    <property type="entry name" value="F-BOX PROTEIN SKIP8"/>
    <property type="match status" value="1"/>
</dbReference>
<dbReference type="PANTHER" id="PTHR47124:SF1">
    <property type="entry name" value="F-BOX PROTEIN SKIP8"/>
    <property type="match status" value="1"/>
</dbReference>
<dbReference type="Pfam" id="PF12937">
    <property type="entry name" value="F-box-like"/>
    <property type="match status" value="1"/>
</dbReference>
<dbReference type="SUPFAM" id="SSF81383">
    <property type="entry name" value="F-box domain"/>
    <property type="match status" value="1"/>
</dbReference>
<dbReference type="PROSITE" id="PS50181">
    <property type="entry name" value="FBOX"/>
    <property type="match status" value="1"/>
</dbReference>
<protein>
    <recommendedName>
        <fullName>Probable F-box protein At4g23960</fullName>
    </recommendedName>
</protein>
<proteinExistence type="predicted"/>
<accession>Q9T0B0</accession>